<name>NIRC_PSEAE</name>
<feature type="signal peptide" evidence="1">
    <location>
        <begin position="1"/>
        <end position="20"/>
    </location>
</feature>
<feature type="chain" id="PRO_0000006572" description="Cytochrome c55X">
    <location>
        <begin position="21"/>
        <end position="119"/>
    </location>
</feature>
<feature type="binding site" description="covalent" evidence="2">
    <location>
        <position position="51"/>
    </location>
    <ligand>
        <name>heme c</name>
        <dbReference type="ChEBI" id="CHEBI:61717"/>
    </ligand>
</feature>
<feature type="binding site" description="covalent" evidence="2">
    <location>
        <position position="54"/>
    </location>
    <ligand>
        <name>heme c</name>
        <dbReference type="ChEBI" id="CHEBI:61717"/>
    </ligand>
</feature>
<feature type="binding site" description="axial binding residue" evidence="2">
    <location>
        <position position="55"/>
    </location>
    <ligand>
        <name>heme c</name>
        <dbReference type="ChEBI" id="CHEBI:61717"/>
    </ligand>
    <ligandPart>
        <name>Fe</name>
        <dbReference type="ChEBI" id="CHEBI:18248"/>
    </ligandPart>
</feature>
<feature type="helix" evidence="3">
    <location>
        <begin position="37"/>
        <end position="49"/>
    </location>
</feature>
<feature type="helix" evidence="3">
    <location>
        <begin position="51"/>
        <end position="54"/>
    </location>
</feature>
<feature type="strand" evidence="3">
    <location>
        <begin position="57"/>
        <end position="59"/>
    </location>
</feature>
<feature type="strand" evidence="3">
    <location>
        <begin position="61"/>
        <end position="64"/>
    </location>
</feature>
<feature type="turn" evidence="3">
    <location>
        <begin position="69"/>
        <end position="74"/>
    </location>
</feature>
<feature type="helix" evidence="3">
    <location>
        <begin position="77"/>
        <end position="86"/>
    </location>
</feature>
<feature type="turn" evidence="3">
    <location>
        <begin position="97"/>
        <end position="99"/>
    </location>
</feature>
<feature type="helix" evidence="3">
    <location>
        <begin position="102"/>
        <end position="113"/>
    </location>
</feature>
<proteinExistence type="evidence at protein level"/>
<dbReference type="EMBL" id="D50473">
    <property type="protein sequence ID" value="BAA09065.1"/>
    <property type="molecule type" value="Genomic_DNA"/>
</dbReference>
<dbReference type="EMBL" id="AE004091">
    <property type="protein sequence ID" value="AAG03906.1"/>
    <property type="molecule type" value="Genomic_DNA"/>
</dbReference>
<dbReference type="PIR" id="JC4552">
    <property type="entry name" value="JC4552"/>
</dbReference>
<dbReference type="RefSeq" id="NP_249208.1">
    <property type="nucleotide sequence ID" value="NC_002516.2"/>
</dbReference>
<dbReference type="RefSeq" id="WP_003084870.1">
    <property type="nucleotide sequence ID" value="NZ_QZGE01000010.1"/>
</dbReference>
<dbReference type="PDB" id="6TP9">
    <property type="method" value="X-ray"/>
    <property type="resolution" value="2.19 A"/>
    <property type="chains" value="A/B/C/D/E/F/G/H/I/J/K=32-119"/>
</dbReference>
<dbReference type="PDBsum" id="6TP9"/>
<dbReference type="SMR" id="Q51479"/>
<dbReference type="STRING" id="208964.PA0517"/>
<dbReference type="PaxDb" id="208964-PA0517"/>
<dbReference type="GeneID" id="879462"/>
<dbReference type="KEGG" id="pae:PA0517"/>
<dbReference type="PATRIC" id="fig|208964.12.peg.547"/>
<dbReference type="PseudoCAP" id="PA0517"/>
<dbReference type="HOGENOM" id="CLU_159748_0_0_6"/>
<dbReference type="InParanoid" id="Q51479"/>
<dbReference type="OrthoDB" id="8689082at2"/>
<dbReference type="BioCyc" id="PAER208964:G1FZ6-522-MONOMER"/>
<dbReference type="PHI-base" id="PHI:5444"/>
<dbReference type="Proteomes" id="UP000002438">
    <property type="component" value="Chromosome"/>
</dbReference>
<dbReference type="GO" id="GO:0042597">
    <property type="term" value="C:periplasmic space"/>
    <property type="evidence" value="ECO:0007669"/>
    <property type="project" value="UniProtKB-SubCell"/>
</dbReference>
<dbReference type="GO" id="GO:0009055">
    <property type="term" value="F:electron transfer activity"/>
    <property type="evidence" value="ECO:0007669"/>
    <property type="project" value="InterPro"/>
</dbReference>
<dbReference type="GO" id="GO:0020037">
    <property type="term" value="F:heme binding"/>
    <property type="evidence" value="ECO:0007669"/>
    <property type="project" value="InterPro"/>
</dbReference>
<dbReference type="GO" id="GO:0046872">
    <property type="term" value="F:metal ion binding"/>
    <property type="evidence" value="ECO:0007669"/>
    <property type="project" value="UniProtKB-KW"/>
</dbReference>
<dbReference type="Gene3D" id="1.10.760.10">
    <property type="entry name" value="Cytochrome c-like domain"/>
    <property type="match status" value="1"/>
</dbReference>
<dbReference type="InterPro" id="IPR009056">
    <property type="entry name" value="Cyt_c-like_dom"/>
</dbReference>
<dbReference type="InterPro" id="IPR036909">
    <property type="entry name" value="Cyt_c-like_dom_sf"/>
</dbReference>
<dbReference type="Pfam" id="PF13442">
    <property type="entry name" value="Cytochrome_CBB3"/>
    <property type="match status" value="1"/>
</dbReference>
<dbReference type="SUPFAM" id="SSF46626">
    <property type="entry name" value="Cytochrome c"/>
    <property type="match status" value="1"/>
</dbReference>
<dbReference type="PROSITE" id="PS51007">
    <property type="entry name" value="CYTC"/>
    <property type="match status" value="1"/>
</dbReference>
<protein>
    <recommendedName>
        <fullName>Cytochrome c55X</fullName>
    </recommendedName>
</protein>
<keyword id="KW-0002">3D-structure</keyword>
<keyword id="KW-0249">Electron transport</keyword>
<keyword id="KW-0349">Heme</keyword>
<keyword id="KW-0408">Iron</keyword>
<keyword id="KW-0479">Metal-binding</keyword>
<keyword id="KW-0574">Periplasm</keyword>
<keyword id="KW-1185">Reference proteome</keyword>
<keyword id="KW-0732">Signal</keyword>
<keyword id="KW-0813">Transport</keyword>
<evidence type="ECO:0000255" key="1"/>
<evidence type="ECO:0000255" key="2">
    <source>
        <dbReference type="PROSITE-ProRule" id="PRU00433"/>
    </source>
</evidence>
<evidence type="ECO:0007829" key="3">
    <source>
        <dbReference type="PDB" id="6TP9"/>
    </source>
</evidence>
<gene>
    <name type="primary">nirC</name>
    <name type="ordered locus">PA0517</name>
</gene>
<accession>Q51479</accession>
<organism>
    <name type="scientific">Pseudomonas aeruginosa (strain ATCC 15692 / DSM 22644 / CIP 104116 / JCM 14847 / LMG 12228 / 1C / PRS 101 / PAO1)</name>
    <dbReference type="NCBI Taxonomy" id="208964"/>
    <lineage>
        <taxon>Bacteria</taxon>
        <taxon>Pseudomonadati</taxon>
        <taxon>Pseudomonadota</taxon>
        <taxon>Gammaproteobacteria</taxon>
        <taxon>Pseudomonadales</taxon>
        <taxon>Pseudomonadaceae</taxon>
        <taxon>Pseudomonas</taxon>
    </lineage>
</organism>
<comment type="function">
    <text>Monoheme c-type cytochrome.</text>
</comment>
<comment type="subcellular location">
    <subcellularLocation>
        <location>Periplasm</location>
    </subcellularLocation>
</comment>
<comment type="PTM">
    <text>Binds 1 heme c group covalently per subunit.</text>
</comment>
<sequence>MNAPPDFRRAASHALWLALALTFACPLPGLADEHPDARRQAQLRHLLLQDCGSCHGLRLTGGLGPALTPEALRGKPRESLVATVLMGRPQTPMPPWAGLLSEDDAGWLVDRLIEGEIAP</sequence>
<reference key="1">
    <citation type="journal article" date="1995" name="Gene">
        <title>Sequencing and characterization of the downstream region of the genes encoding nitrite reductase and cytochrome c-551 (nirSM) from Pseudomonas aeruginosa: identification of the gene necessary for biosynthesis of heme d1.</title>
        <authorList>
            <person name="Kawasaki S."/>
            <person name="Arai H."/>
            <person name="Igarashi Y."/>
            <person name="Kodama T."/>
        </authorList>
    </citation>
    <scope>NUCLEOTIDE SEQUENCE [GENOMIC DNA]</scope>
    <source>
        <strain>ATCC 15692 / DSM 22644 / CIP 104116 / JCM 14847 / LMG 12228 / 1C / PRS 101 / PAO1</strain>
    </source>
</reference>
<reference key="2">
    <citation type="journal article" date="2000" name="Nature">
        <title>Complete genome sequence of Pseudomonas aeruginosa PAO1, an opportunistic pathogen.</title>
        <authorList>
            <person name="Stover C.K."/>
            <person name="Pham X.-Q.T."/>
            <person name="Erwin A.L."/>
            <person name="Mizoguchi S.D."/>
            <person name="Warrener P."/>
            <person name="Hickey M.J."/>
            <person name="Brinkman F.S.L."/>
            <person name="Hufnagle W.O."/>
            <person name="Kowalik D.J."/>
            <person name="Lagrou M."/>
            <person name="Garber R.L."/>
            <person name="Goltry L."/>
            <person name="Tolentino E."/>
            <person name="Westbrock-Wadman S."/>
            <person name="Yuan Y."/>
            <person name="Brody L.L."/>
            <person name="Coulter S.N."/>
            <person name="Folger K.R."/>
            <person name="Kas A."/>
            <person name="Larbig K."/>
            <person name="Lim R.M."/>
            <person name="Smith K.A."/>
            <person name="Spencer D.H."/>
            <person name="Wong G.K.-S."/>
            <person name="Wu Z."/>
            <person name="Paulsen I.T."/>
            <person name="Reizer J."/>
            <person name="Saier M.H. Jr."/>
            <person name="Hancock R.E.W."/>
            <person name="Lory S."/>
            <person name="Olson M.V."/>
        </authorList>
    </citation>
    <scope>NUCLEOTIDE SEQUENCE [LARGE SCALE GENOMIC DNA]</scope>
    <source>
        <strain>ATCC 15692 / DSM 22644 / CIP 104116 / JCM 14847 / LMG 12228 / 1C / PRS 101 / PAO1</strain>
    </source>
</reference>